<dbReference type="EC" id="1.7.99.1" evidence="1"/>
<dbReference type="EMBL" id="CP001063">
    <property type="protein sequence ID" value="ACD07319.1"/>
    <property type="molecule type" value="Genomic_DNA"/>
</dbReference>
<dbReference type="RefSeq" id="WP_000458822.1">
    <property type="nucleotide sequence ID" value="NC_010658.1"/>
</dbReference>
<dbReference type="SMR" id="B2TUK6"/>
<dbReference type="STRING" id="344609.SbBS512_E2458"/>
<dbReference type="KEGG" id="sbc:SbBS512_E2458"/>
<dbReference type="HOGENOM" id="CLU_038344_2_0_6"/>
<dbReference type="Proteomes" id="UP000001030">
    <property type="component" value="Chromosome"/>
</dbReference>
<dbReference type="GO" id="GO:0005737">
    <property type="term" value="C:cytoplasm"/>
    <property type="evidence" value="ECO:0007669"/>
    <property type="project" value="UniProtKB-SubCell"/>
</dbReference>
<dbReference type="GO" id="GO:0051537">
    <property type="term" value="F:2 iron, 2 sulfur cluster binding"/>
    <property type="evidence" value="ECO:0007669"/>
    <property type="project" value="UniProtKB-KW"/>
</dbReference>
<dbReference type="GO" id="GO:0050418">
    <property type="term" value="F:hydroxylamine reductase activity"/>
    <property type="evidence" value="ECO:0007669"/>
    <property type="project" value="UniProtKB-UniRule"/>
</dbReference>
<dbReference type="GO" id="GO:0046872">
    <property type="term" value="F:metal ion binding"/>
    <property type="evidence" value="ECO:0007669"/>
    <property type="project" value="UniProtKB-KW"/>
</dbReference>
<dbReference type="GO" id="GO:0004601">
    <property type="term" value="F:peroxidase activity"/>
    <property type="evidence" value="ECO:0007669"/>
    <property type="project" value="TreeGrafter"/>
</dbReference>
<dbReference type="GO" id="GO:0042542">
    <property type="term" value="P:response to hydrogen peroxide"/>
    <property type="evidence" value="ECO:0007669"/>
    <property type="project" value="TreeGrafter"/>
</dbReference>
<dbReference type="CDD" id="cd01914">
    <property type="entry name" value="HCP"/>
    <property type="match status" value="1"/>
</dbReference>
<dbReference type="FunFam" id="1.20.1270.20:FF:000001">
    <property type="entry name" value="Hydroxylamine reductase"/>
    <property type="match status" value="1"/>
</dbReference>
<dbReference type="FunFam" id="1.20.1270.20:FF:000002">
    <property type="entry name" value="Hydroxylamine reductase"/>
    <property type="match status" value="1"/>
</dbReference>
<dbReference type="FunFam" id="3.40.50.2030:FF:000001">
    <property type="entry name" value="Hydroxylamine reductase"/>
    <property type="match status" value="1"/>
</dbReference>
<dbReference type="FunFam" id="3.40.50.2030:FF:000002">
    <property type="entry name" value="Hydroxylamine reductase"/>
    <property type="match status" value="1"/>
</dbReference>
<dbReference type="Gene3D" id="1.20.1270.20">
    <property type="match status" value="2"/>
</dbReference>
<dbReference type="Gene3D" id="3.40.50.2030">
    <property type="match status" value="2"/>
</dbReference>
<dbReference type="HAMAP" id="MF_00069">
    <property type="entry name" value="Hydroxylam_reduct"/>
    <property type="match status" value="1"/>
</dbReference>
<dbReference type="InterPro" id="IPR004137">
    <property type="entry name" value="HCP/CODH"/>
</dbReference>
<dbReference type="InterPro" id="IPR010048">
    <property type="entry name" value="Hydroxylam_reduct"/>
</dbReference>
<dbReference type="InterPro" id="IPR016099">
    <property type="entry name" value="Prismane-like_a/b-sand"/>
</dbReference>
<dbReference type="InterPro" id="IPR011254">
    <property type="entry name" value="Prismane-like_sf"/>
</dbReference>
<dbReference type="InterPro" id="IPR016100">
    <property type="entry name" value="Prismane_a-bundle"/>
</dbReference>
<dbReference type="NCBIfam" id="TIGR01703">
    <property type="entry name" value="hybrid_clust"/>
    <property type="match status" value="1"/>
</dbReference>
<dbReference type="NCBIfam" id="NF003658">
    <property type="entry name" value="PRK05290.1"/>
    <property type="match status" value="1"/>
</dbReference>
<dbReference type="PANTHER" id="PTHR30109">
    <property type="entry name" value="HYDROXYLAMINE REDUCTASE"/>
    <property type="match status" value="1"/>
</dbReference>
<dbReference type="PANTHER" id="PTHR30109:SF0">
    <property type="entry name" value="HYDROXYLAMINE REDUCTASE"/>
    <property type="match status" value="1"/>
</dbReference>
<dbReference type="Pfam" id="PF03063">
    <property type="entry name" value="Prismane"/>
    <property type="match status" value="1"/>
</dbReference>
<dbReference type="PIRSF" id="PIRSF000076">
    <property type="entry name" value="HCP"/>
    <property type="match status" value="1"/>
</dbReference>
<dbReference type="SUPFAM" id="SSF56821">
    <property type="entry name" value="Prismane protein-like"/>
    <property type="match status" value="1"/>
</dbReference>
<name>HCP_SHIB3</name>
<organism>
    <name type="scientific">Shigella boydii serotype 18 (strain CDC 3083-94 / BS512)</name>
    <dbReference type="NCBI Taxonomy" id="344609"/>
    <lineage>
        <taxon>Bacteria</taxon>
        <taxon>Pseudomonadati</taxon>
        <taxon>Pseudomonadota</taxon>
        <taxon>Gammaproteobacteria</taxon>
        <taxon>Enterobacterales</taxon>
        <taxon>Enterobacteriaceae</taxon>
        <taxon>Shigella</taxon>
    </lineage>
</organism>
<accession>B2TUK6</accession>
<evidence type="ECO:0000255" key="1">
    <source>
        <dbReference type="HAMAP-Rule" id="MF_00069"/>
    </source>
</evidence>
<feature type="chain" id="PRO_1000092353" description="Hydroxylamine reductase">
    <location>
        <begin position="1"/>
        <end position="550"/>
    </location>
</feature>
<feature type="binding site" evidence="1">
    <location>
        <position position="3"/>
    </location>
    <ligand>
        <name>[2Fe-2S] cluster</name>
        <dbReference type="ChEBI" id="CHEBI:190135"/>
    </ligand>
</feature>
<feature type="binding site" evidence="1">
    <location>
        <position position="6"/>
    </location>
    <ligand>
        <name>[2Fe-2S] cluster</name>
        <dbReference type="ChEBI" id="CHEBI:190135"/>
    </ligand>
</feature>
<feature type="binding site" evidence="1">
    <location>
        <position position="18"/>
    </location>
    <ligand>
        <name>[2Fe-2S] cluster</name>
        <dbReference type="ChEBI" id="CHEBI:190135"/>
    </ligand>
</feature>
<feature type="binding site" evidence="1">
    <location>
        <position position="25"/>
    </location>
    <ligand>
        <name>[2Fe-2S] cluster</name>
        <dbReference type="ChEBI" id="CHEBI:190135"/>
    </ligand>
</feature>
<feature type="binding site" evidence="1">
    <location>
        <position position="249"/>
    </location>
    <ligand>
        <name>hybrid [4Fe-2O-2S] cluster</name>
        <dbReference type="ChEBI" id="CHEBI:60519"/>
    </ligand>
</feature>
<feature type="binding site" evidence="1">
    <location>
        <position position="273"/>
    </location>
    <ligand>
        <name>hybrid [4Fe-2O-2S] cluster</name>
        <dbReference type="ChEBI" id="CHEBI:60519"/>
    </ligand>
</feature>
<feature type="binding site" evidence="1">
    <location>
        <position position="317"/>
    </location>
    <ligand>
        <name>hybrid [4Fe-2O-2S] cluster</name>
        <dbReference type="ChEBI" id="CHEBI:60519"/>
    </ligand>
</feature>
<feature type="binding site" description="via persulfide group" evidence="1">
    <location>
        <position position="405"/>
    </location>
    <ligand>
        <name>hybrid [4Fe-2O-2S] cluster</name>
        <dbReference type="ChEBI" id="CHEBI:60519"/>
    </ligand>
</feature>
<feature type="binding site" evidence="1">
    <location>
        <position position="433"/>
    </location>
    <ligand>
        <name>hybrid [4Fe-2O-2S] cluster</name>
        <dbReference type="ChEBI" id="CHEBI:60519"/>
    </ligand>
</feature>
<feature type="binding site" evidence="1">
    <location>
        <position position="458"/>
    </location>
    <ligand>
        <name>hybrid [4Fe-2O-2S] cluster</name>
        <dbReference type="ChEBI" id="CHEBI:60519"/>
    </ligand>
</feature>
<feature type="binding site" evidence="1">
    <location>
        <position position="492"/>
    </location>
    <ligand>
        <name>hybrid [4Fe-2O-2S] cluster</name>
        <dbReference type="ChEBI" id="CHEBI:60519"/>
    </ligand>
</feature>
<feature type="binding site" evidence="1">
    <location>
        <position position="494"/>
    </location>
    <ligand>
        <name>hybrid [4Fe-2O-2S] cluster</name>
        <dbReference type="ChEBI" id="CHEBI:60519"/>
    </ligand>
</feature>
<feature type="modified residue" description="Cysteine persulfide" evidence="1">
    <location>
        <position position="405"/>
    </location>
</feature>
<proteinExistence type="inferred from homology"/>
<sequence>MFCVQCEQTIRTPAGNGCSYAQGMCGKTAETSDLQDLLIAALQGLSAWAVKAREYGIINHDVDSFAPRAFFSTLTNVNFDSPRIVGYAREAIALREALKAQCLAVDANARVDNPMADLQLVSDDLGELQRQAAEFTPNKDKAAIGENILGLRLLCLYGLKGAAAYMEHAHVLGQYDNDIYAQYHKIMAWLGTWPADMNALLECSMEIGQMNFKVMSILDAGETGKYGHPTPTQVNVKATAGKCILISGHDLKDLYNLLEQTEGTGVNVYTHGEMLPAHGYPELRKFKHLVGNYGSGWQNQQVEFARFPGPIVMTSNCIIDPTVSAYDDRIWTRSIVGWPGVRHLDGDDFSAVITQAQQMAGFPYSEIPHLITVGFGRQTLLGAADTLIDLVSREKLRHIFLLGGCDGARGERHYFTDFATIVPDDCLILTLACGKYRFNKLEFGDIEGLPRLVDAGQCNDAYSAIILAVTLAEKLGCGVNDLPLSLVLSWFEQKAIVILLTLLSLGVKNIVTGPTAPGFLTPDLLAVLNEKFGLRSITTVEEDMKQLLSA</sequence>
<keyword id="KW-0001">2Fe-2S</keyword>
<keyword id="KW-0963">Cytoplasm</keyword>
<keyword id="KW-0408">Iron</keyword>
<keyword id="KW-0411">Iron-sulfur</keyword>
<keyword id="KW-0479">Metal-binding</keyword>
<keyword id="KW-0560">Oxidoreductase</keyword>
<keyword id="KW-1185">Reference proteome</keyword>
<protein>
    <recommendedName>
        <fullName evidence="1">Hydroxylamine reductase</fullName>
        <ecNumber evidence="1">1.7.99.1</ecNumber>
    </recommendedName>
    <alternativeName>
        <fullName evidence="1">Hybrid-cluster protein</fullName>
        <shortName evidence="1">HCP</shortName>
    </alternativeName>
    <alternativeName>
        <fullName evidence="1">Prismane protein</fullName>
    </alternativeName>
</protein>
<comment type="function">
    <text evidence="1">Catalyzes the reduction of hydroxylamine to form NH(3) and H(2)O.</text>
</comment>
<comment type="catalytic activity">
    <reaction evidence="1">
        <text>A + NH4(+) + H2O = hydroxylamine + AH2 + H(+)</text>
        <dbReference type="Rhea" id="RHEA:22052"/>
        <dbReference type="ChEBI" id="CHEBI:13193"/>
        <dbReference type="ChEBI" id="CHEBI:15377"/>
        <dbReference type="ChEBI" id="CHEBI:15378"/>
        <dbReference type="ChEBI" id="CHEBI:15429"/>
        <dbReference type="ChEBI" id="CHEBI:17499"/>
        <dbReference type="ChEBI" id="CHEBI:28938"/>
        <dbReference type="EC" id="1.7.99.1"/>
    </reaction>
</comment>
<comment type="cofactor">
    <cofactor evidence="1">
        <name>[2Fe-2S] cluster</name>
        <dbReference type="ChEBI" id="CHEBI:190135"/>
    </cofactor>
    <text evidence="1">Binds 1 [2Fe-2S] cluster.</text>
</comment>
<comment type="cofactor">
    <cofactor evidence="1">
        <name>hybrid [4Fe-2O-2S] cluster</name>
        <dbReference type="ChEBI" id="CHEBI:60519"/>
    </cofactor>
    <text evidence="1">Binds 1 hybrid [4Fe-2O-2S] cluster.</text>
</comment>
<comment type="subcellular location">
    <subcellularLocation>
        <location evidence="1">Cytoplasm</location>
    </subcellularLocation>
</comment>
<comment type="similarity">
    <text evidence="1">Belongs to the HCP family.</text>
</comment>
<gene>
    <name evidence="1" type="primary">hcp</name>
    <name type="ordered locus">SbBS512_E2458</name>
</gene>
<reference key="1">
    <citation type="submission" date="2008-05" db="EMBL/GenBank/DDBJ databases">
        <title>Complete sequence of Shigella boydii serotype 18 strain BS512.</title>
        <authorList>
            <person name="Rasko D.A."/>
            <person name="Rosovitz M."/>
            <person name="Maurelli A.T."/>
            <person name="Myers G."/>
            <person name="Seshadri R."/>
            <person name="Cer R."/>
            <person name="Jiang L."/>
            <person name="Ravel J."/>
            <person name="Sebastian Y."/>
        </authorList>
    </citation>
    <scope>NUCLEOTIDE SEQUENCE [LARGE SCALE GENOMIC DNA]</scope>
    <source>
        <strain>CDC 3083-94 / BS512</strain>
    </source>
</reference>